<feature type="chain" id="PRO_0000052619" description="Hemoglobin subunit alpha">
    <location>
        <begin position="1"/>
        <end position="141"/>
    </location>
</feature>
<feature type="peptide" id="PRO_0000455866" description="Hemopressin" evidence="2">
    <location>
        <begin position="95"/>
        <end position="103"/>
    </location>
</feature>
<feature type="domain" description="Globin" evidence="4">
    <location>
        <begin position="1"/>
        <end position="141"/>
    </location>
</feature>
<feature type="binding site">
    <location>
        <position position="58"/>
    </location>
    <ligand>
        <name>O2</name>
        <dbReference type="ChEBI" id="CHEBI:15379"/>
    </ligand>
</feature>
<feature type="binding site" description="proximal binding residue" evidence="4">
    <location>
        <position position="87"/>
    </location>
    <ligand>
        <name>heme b</name>
        <dbReference type="ChEBI" id="CHEBI:60344"/>
    </ligand>
    <ligandPart>
        <name>Fe</name>
        <dbReference type="ChEBI" id="CHEBI:18248"/>
    </ligandPart>
</feature>
<feature type="modified residue" description="Phosphoserine" evidence="3">
    <location>
        <position position="3"/>
    </location>
</feature>
<feature type="modified residue" description="N6-succinyllysine" evidence="1">
    <location>
        <position position="7"/>
    </location>
</feature>
<feature type="modified residue" description="Phosphothreonine" evidence="3">
    <location>
        <position position="8"/>
    </location>
</feature>
<feature type="modified residue" description="N6-succinyllysine" evidence="1">
    <location>
        <position position="11"/>
    </location>
</feature>
<feature type="modified residue" description="N6-acetyllysine; alternate" evidence="3">
    <location>
        <position position="16"/>
    </location>
</feature>
<feature type="modified residue" description="N6-succinyllysine; alternate" evidence="1">
    <location>
        <position position="16"/>
    </location>
</feature>
<feature type="modified residue" description="Phosphotyrosine" evidence="3">
    <location>
        <position position="24"/>
    </location>
</feature>
<feature type="modified residue" description="Phosphoserine" evidence="3">
    <location>
        <position position="35"/>
    </location>
</feature>
<feature type="modified residue" description="N6-succinyllysine" evidence="1">
    <location>
        <position position="40"/>
    </location>
</feature>
<feature type="modified residue" description="Phosphoserine" evidence="3">
    <location>
        <position position="49"/>
    </location>
</feature>
<feature type="modified residue" description="Phosphothreonine" evidence="1">
    <location>
        <position position="108"/>
    </location>
</feature>
<feature type="modified residue" description="Phosphoserine" evidence="1">
    <location>
        <position position="124"/>
    </location>
</feature>
<feature type="modified residue" description="Phosphoserine" evidence="1">
    <location>
        <position position="131"/>
    </location>
</feature>
<feature type="modified residue" description="Phosphothreonine" evidence="1">
    <location>
        <position position="134"/>
    </location>
</feature>
<feature type="modified residue" description="Phosphothreonine" evidence="1">
    <location>
        <position position="137"/>
    </location>
</feature>
<feature type="modified residue" description="Phosphoserine" evidence="1">
    <location>
        <position position="138"/>
    </location>
</feature>
<comment type="function">
    <text>Involved in oxygen transport from the lung to the various peripheral tissues.</text>
</comment>
<comment type="function">
    <molecule>Hemopressin</molecule>
    <text evidence="2">Hemopressin acts as an antagonist peptide of the cannabinoid receptor CNR1. Hemopressin-binding efficiently blocks cannabinoid receptor CNR1 and subsequent signaling.</text>
</comment>
<comment type="subunit">
    <text>Heterotetramer of two alpha chains and two beta chains.</text>
</comment>
<comment type="tissue specificity">
    <text>Red blood cells.</text>
</comment>
<comment type="similarity">
    <text evidence="4">Belongs to the globin family.</text>
</comment>
<keyword id="KW-0007">Acetylation</keyword>
<keyword id="KW-0903">Direct protein sequencing</keyword>
<keyword id="KW-0349">Heme</keyword>
<keyword id="KW-0408">Iron</keyword>
<keyword id="KW-0479">Metal-binding</keyword>
<keyword id="KW-0561">Oxygen transport</keyword>
<keyword id="KW-0597">Phosphoprotein</keyword>
<keyword id="KW-0813">Transport</keyword>
<name>HBA_DIDVI</name>
<gene>
    <name type="primary">HBA</name>
</gene>
<evidence type="ECO:0000250" key="1">
    <source>
        <dbReference type="UniProtKB" id="P01942"/>
    </source>
</evidence>
<evidence type="ECO:0000250" key="2">
    <source>
        <dbReference type="UniProtKB" id="P01946"/>
    </source>
</evidence>
<evidence type="ECO:0000250" key="3">
    <source>
        <dbReference type="UniProtKB" id="P69905"/>
    </source>
</evidence>
<evidence type="ECO:0000255" key="4">
    <source>
        <dbReference type="PROSITE-ProRule" id="PRU00238"/>
    </source>
</evidence>
<proteinExistence type="evidence at protein level"/>
<accession>P01976</accession>
<dbReference type="PIR" id="A02299">
    <property type="entry name" value="HAOPV"/>
</dbReference>
<dbReference type="SMR" id="P01976"/>
<dbReference type="GO" id="GO:0072562">
    <property type="term" value="C:blood microparticle"/>
    <property type="evidence" value="ECO:0007669"/>
    <property type="project" value="TreeGrafter"/>
</dbReference>
<dbReference type="GO" id="GO:0031838">
    <property type="term" value="C:haptoglobin-hemoglobin complex"/>
    <property type="evidence" value="ECO:0007669"/>
    <property type="project" value="TreeGrafter"/>
</dbReference>
<dbReference type="GO" id="GO:0005833">
    <property type="term" value="C:hemoglobin complex"/>
    <property type="evidence" value="ECO:0007669"/>
    <property type="project" value="InterPro"/>
</dbReference>
<dbReference type="GO" id="GO:0031720">
    <property type="term" value="F:haptoglobin binding"/>
    <property type="evidence" value="ECO:0007669"/>
    <property type="project" value="TreeGrafter"/>
</dbReference>
<dbReference type="GO" id="GO:0020037">
    <property type="term" value="F:heme binding"/>
    <property type="evidence" value="ECO:0007669"/>
    <property type="project" value="InterPro"/>
</dbReference>
<dbReference type="GO" id="GO:0046872">
    <property type="term" value="F:metal ion binding"/>
    <property type="evidence" value="ECO:0007669"/>
    <property type="project" value="UniProtKB-KW"/>
</dbReference>
<dbReference type="GO" id="GO:0043177">
    <property type="term" value="F:organic acid binding"/>
    <property type="evidence" value="ECO:0007669"/>
    <property type="project" value="TreeGrafter"/>
</dbReference>
<dbReference type="GO" id="GO:0019825">
    <property type="term" value="F:oxygen binding"/>
    <property type="evidence" value="ECO:0007669"/>
    <property type="project" value="InterPro"/>
</dbReference>
<dbReference type="GO" id="GO:0005344">
    <property type="term" value="F:oxygen carrier activity"/>
    <property type="evidence" value="ECO:0007669"/>
    <property type="project" value="UniProtKB-KW"/>
</dbReference>
<dbReference type="GO" id="GO:0004601">
    <property type="term" value="F:peroxidase activity"/>
    <property type="evidence" value="ECO:0007669"/>
    <property type="project" value="TreeGrafter"/>
</dbReference>
<dbReference type="GO" id="GO:0042744">
    <property type="term" value="P:hydrogen peroxide catabolic process"/>
    <property type="evidence" value="ECO:0007669"/>
    <property type="project" value="TreeGrafter"/>
</dbReference>
<dbReference type="CDD" id="cd08927">
    <property type="entry name" value="Hb-alpha-like"/>
    <property type="match status" value="1"/>
</dbReference>
<dbReference type="FunFam" id="1.10.490.10:FF:000002">
    <property type="entry name" value="Hemoglobin subunit alpha"/>
    <property type="match status" value="1"/>
</dbReference>
<dbReference type="Gene3D" id="1.10.490.10">
    <property type="entry name" value="Globins"/>
    <property type="match status" value="1"/>
</dbReference>
<dbReference type="InterPro" id="IPR000971">
    <property type="entry name" value="Globin"/>
</dbReference>
<dbReference type="InterPro" id="IPR009050">
    <property type="entry name" value="Globin-like_sf"/>
</dbReference>
<dbReference type="InterPro" id="IPR012292">
    <property type="entry name" value="Globin/Proto"/>
</dbReference>
<dbReference type="InterPro" id="IPR002338">
    <property type="entry name" value="Hemoglobin_a-typ"/>
</dbReference>
<dbReference type="InterPro" id="IPR050056">
    <property type="entry name" value="Hemoglobin_oxygen_transport"/>
</dbReference>
<dbReference type="PANTHER" id="PTHR11442">
    <property type="entry name" value="HEMOGLOBIN FAMILY MEMBER"/>
    <property type="match status" value="1"/>
</dbReference>
<dbReference type="PANTHER" id="PTHR11442:SF48">
    <property type="entry name" value="HEMOGLOBIN SUBUNIT ALPHA"/>
    <property type="match status" value="1"/>
</dbReference>
<dbReference type="Pfam" id="PF00042">
    <property type="entry name" value="Globin"/>
    <property type="match status" value="1"/>
</dbReference>
<dbReference type="PRINTS" id="PR00612">
    <property type="entry name" value="ALPHAHAEM"/>
</dbReference>
<dbReference type="SUPFAM" id="SSF46458">
    <property type="entry name" value="Globin-like"/>
    <property type="match status" value="1"/>
</dbReference>
<dbReference type="PROSITE" id="PS01033">
    <property type="entry name" value="GLOBIN"/>
    <property type="match status" value="1"/>
</dbReference>
<protein>
    <recommendedName>
        <fullName>Hemoglobin subunit alpha</fullName>
    </recommendedName>
    <alternativeName>
        <fullName>Alpha-globin</fullName>
    </alternativeName>
    <alternativeName>
        <fullName>Hemoglobin alpha chain</fullName>
    </alternativeName>
    <component>
        <recommendedName>
            <fullName evidence="2">Hemopressin</fullName>
        </recommendedName>
    </component>
</protein>
<organism>
    <name type="scientific">Didelphis virginiana</name>
    <name type="common">North American opossum</name>
    <name type="synonym">Didelphis marsupialis virginiana</name>
    <dbReference type="NCBI Taxonomy" id="9267"/>
    <lineage>
        <taxon>Eukaryota</taxon>
        <taxon>Metazoa</taxon>
        <taxon>Chordata</taxon>
        <taxon>Craniata</taxon>
        <taxon>Vertebrata</taxon>
        <taxon>Euteleostomi</taxon>
        <taxon>Mammalia</taxon>
        <taxon>Metatheria</taxon>
        <taxon>Didelphimorphia</taxon>
        <taxon>Didelphidae</taxon>
        <taxon>Didelphis</taxon>
    </lineage>
</organism>
<reference key="1">
    <citation type="journal article" date="1974" name="Nature">
        <title>Opossum Hb chain sequence and neutral mutation theory.</title>
        <authorList>
            <person name="Stenzel P."/>
        </authorList>
    </citation>
    <scope>PROTEIN SEQUENCE</scope>
</reference>
<sequence>VLSANDKTNVKGAWSKVGGNSGAYMGEALYRTFLSFPTTKTYFPNYDFSAGSAQIKTQGQKIADAVGLAVAHLDDMPTALSSLSDLHAHELKVDPVNFKFLCHNVLVTMAAHLGKDFTPEIHASMDKFLASVSTVLTSKYR</sequence>